<comment type="function">
    <text evidence="2">Photoreceptor that binds cis-retinaldehydes (By similarity). Contributes to pupillar reflex, photoentrainment and other non-image forming responses to light (By similarity). May be involved in the optokinetic visual tracking response (By similarity). May be involved in the regulation of retinal hyaloid vessel growth and regression (By similarity).</text>
</comment>
<comment type="subcellular location">
    <subcellularLocation>
        <location evidence="2">Cell membrane</location>
        <topology evidence="3">Multi-pass membrane protein</topology>
    </subcellularLocation>
    <subcellularLocation>
        <location evidence="2">Cell projection</location>
        <location evidence="2">Axon</location>
    </subcellularLocation>
    <subcellularLocation>
        <location evidence="2">Cell projection</location>
        <location evidence="2">Dendrite</location>
    </subcellularLocation>
    <subcellularLocation>
        <location evidence="2">Perikaryon</location>
    </subcellularLocation>
</comment>
<comment type="similarity">
    <text evidence="4">Belongs to the G-protein coupled receptor 1 family. Opsin subfamily.</text>
</comment>
<gene>
    <name type="primary">OPN4</name>
</gene>
<protein>
    <recommendedName>
        <fullName>Melanopsin</fullName>
    </recommendedName>
    <alternativeName>
        <fullName>Opsin-4</fullName>
    </alternativeName>
</protein>
<feature type="chain" id="PRO_0000233061" description="Melanopsin">
    <location>
        <begin position="1"/>
        <end position="469"/>
    </location>
</feature>
<feature type="topological domain" description="Extracellular" evidence="3">
    <location>
        <begin position="1"/>
        <end position="71"/>
    </location>
</feature>
<feature type="transmembrane region" description="Helical; Name=1" evidence="3">
    <location>
        <begin position="72"/>
        <end position="92"/>
    </location>
</feature>
<feature type="topological domain" description="Cytoplasmic" evidence="3">
    <location>
        <begin position="93"/>
        <end position="106"/>
    </location>
</feature>
<feature type="transmembrane region" description="Helical; Name=2" evidence="3">
    <location>
        <begin position="107"/>
        <end position="127"/>
    </location>
</feature>
<feature type="topological domain" description="Extracellular" evidence="3">
    <location>
        <begin position="128"/>
        <end position="143"/>
    </location>
</feature>
<feature type="transmembrane region" description="Helical; Name=3" evidence="3">
    <location>
        <begin position="144"/>
        <end position="164"/>
    </location>
</feature>
<feature type="topological domain" description="Cytoplasmic" evidence="3">
    <location>
        <begin position="165"/>
        <end position="187"/>
    </location>
</feature>
<feature type="transmembrane region" description="Helical; Name=4" evidence="3">
    <location>
        <begin position="188"/>
        <end position="208"/>
    </location>
</feature>
<feature type="topological domain" description="Extracellular" evidence="3">
    <location>
        <begin position="209"/>
        <end position="237"/>
    </location>
</feature>
<feature type="transmembrane region" description="Helical; Name=5" evidence="3">
    <location>
        <begin position="238"/>
        <end position="258"/>
    </location>
</feature>
<feature type="topological domain" description="Cytoplasmic" evidence="3">
    <location>
        <begin position="259"/>
        <end position="295"/>
    </location>
</feature>
<feature type="transmembrane region" description="Helical; Name=6" evidence="3">
    <location>
        <begin position="296"/>
        <end position="316"/>
    </location>
</feature>
<feature type="topological domain" description="Extracellular" evidence="3">
    <location>
        <begin position="317"/>
        <end position="328"/>
    </location>
</feature>
<feature type="transmembrane region" description="Helical; Name=7" evidence="3">
    <location>
        <begin position="329"/>
        <end position="349"/>
    </location>
</feature>
<feature type="topological domain" description="Cytoplasmic" evidence="3">
    <location>
        <begin position="350"/>
        <end position="469"/>
    </location>
</feature>
<feature type="region of interest" description="Disordered" evidence="5">
    <location>
        <begin position="409"/>
        <end position="469"/>
    </location>
</feature>
<feature type="modified residue" description="N6-(retinylidene)lysine" evidence="1">
    <location>
        <position position="336"/>
    </location>
</feature>
<feature type="glycosylation site" description="N-linked (GlcNAc...) asparagine" evidence="3">
    <location>
        <position position="30"/>
    </location>
</feature>
<feature type="disulfide bond" evidence="4">
    <location>
        <begin position="142"/>
        <end position="220"/>
    </location>
</feature>
<reference evidence="7" key="1">
    <citation type="journal article" date="2005" name="Neurosci. Lett.">
        <title>Predicted 3D-structure of melanopsin, the non-rod, non-cone photopigment of the mammalian circadian clock, from Djungarian hamsters (Phodopus sungorus).</title>
        <authorList>
            <person name="Hermann R."/>
            <person name="Poppe L."/>
            <person name="Pilbak S."/>
            <person name="Boden C."/>
            <person name="Maurer J."/>
            <person name="Weber S."/>
            <person name="Lerchl A."/>
        </authorList>
    </citation>
    <scope>NUCLEOTIDE SEQUENCE [MRNA]</scope>
    <source>
        <tissue evidence="6">Retina</tissue>
    </source>
</reference>
<keyword id="KW-0090">Biological rhythms</keyword>
<keyword id="KW-1003">Cell membrane</keyword>
<keyword id="KW-0966">Cell projection</keyword>
<keyword id="KW-0157">Chromophore</keyword>
<keyword id="KW-1015">Disulfide bond</keyword>
<keyword id="KW-0297">G-protein coupled receptor</keyword>
<keyword id="KW-0325">Glycoprotein</keyword>
<keyword id="KW-0472">Membrane</keyword>
<keyword id="KW-0600">Photoreceptor protein</keyword>
<keyword id="KW-0675">Receptor</keyword>
<keyword id="KW-0681">Retinal protein</keyword>
<keyword id="KW-0716">Sensory transduction</keyword>
<keyword id="KW-0807">Transducer</keyword>
<keyword id="KW-0812">Transmembrane</keyword>
<keyword id="KW-1133">Transmembrane helix</keyword>
<name>OPN4_PHOSU</name>
<dbReference type="EMBL" id="AY726733">
    <property type="protein sequence ID" value="AAU11506.1"/>
    <property type="molecule type" value="mRNA"/>
</dbReference>
<dbReference type="SMR" id="Q5XXP2"/>
<dbReference type="GlyCosmos" id="Q5XXP2">
    <property type="glycosylation" value="1 site, No reported glycans"/>
</dbReference>
<dbReference type="GO" id="GO:0030424">
    <property type="term" value="C:axon"/>
    <property type="evidence" value="ECO:0007669"/>
    <property type="project" value="UniProtKB-SubCell"/>
</dbReference>
<dbReference type="GO" id="GO:0030425">
    <property type="term" value="C:dendrite"/>
    <property type="evidence" value="ECO:0007669"/>
    <property type="project" value="UniProtKB-SubCell"/>
</dbReference>
<dbReference type="GO" id="GO:0016020">
    <property type="term" value="C:membrane"/>
    <property type="evidence" value="ECO:0000304"/>
    <property type="project" value="UniProtKB"/>
</dbReference>
<dbReference type="GO" id="GO:0043204">
    <property type="term" value="C:perikaryon"/>
    <property type="evidence" value="ECO:0007669"/>
    <property type="project" value="UniProtKB-SubCell"/>
</dbReference>
<dbReference type="GO" id="GO:0005886">
    <property type="term" value="C:plasma membrane"/>
    <property type="evidence" value="ECO:0000250"/>
    <property type="project" value="UniProtKB"/>
</dbReference>
<dbReference type="GO" id="GO:0005502">
    <property type="term" value="F:11-cis retinal binding"/>
    <property type="evidence" value="ECO:0000250"/>
    <property type="project" value="UniProtKB"/>
</dbReference>
<dbReference type="GO" id="GO:0008020">
    <property type="term" value="F:G protein-coupled photoreceptor activity"/>
    <property type="evidence" value="ECO:0000250"/>
    <property type="project" value="UniProtKB"/>
</dbReference>
<dbReference type="GO" id="GO:1990384">
    <property type="term" value="P:hyaloid vascular plexus regression"/>
    <property type="evidence" value="ECO:0000250"/>
    <property type="project" value="UniProtKB"/>
</dbReference>
<dbReference type="GO" id="GO:0007634">
    <property type="term" value="P:optokinetic behavior"/>
    <property type="evidence" value="ECO:0000250"/>
    <property type="project" value="UniProtKB"/>
</dbReference>
<dbReference type="GO" id="GO:0007602">
    <property type="term" value="P:phototransduction"/>
    <property type="evidence" value="ECO:0000250"/>
    <property type="project" value="UniProtKB"/>
</dbReference>
<dbReference type="GO" id="GO:0042752">
    <property type="term" value="P:regulation of circadian rhythm"/>
    <property type="evidence" value="ECO:0000250"/>
    <property type="project" value="UniProtKB"/>
</dbReference>
<dbReference type="GO" id="GO:0048511">
    <property type="term" value="P:rhythmic process"/>
    <property type="evidence" value="ECO:0007669"/>
    <property type="project" value="UniProtKB-KW"/>
</dbReference>
<dbReference type="GO" id="GO:0007601">
    <property type="term" value="P:visual perception"/>
    <property type="evidence" value="ECO:0007669"/>
    <property type="project" value="InterPro"/>
</dbReference>
<dbReference type="FunFam" id="1.20.1070.10:FF:000083">
    <property type="entry name" value="Melanopsin 1"/>
    <property type="match status" value="1"/>
</dbReference>
<dbReference type="Gene3D" id="1.20.1070.10">
    <property type="entry name" value="Rhodopsin 7-helix transmembrane proteins"/>
    <property type="match status" value="1"/>
</dbReference>
<dbReference type="InterPro" id="IPR050125">
    <property type="entry name" value="GPCR_opsins"/>
</dbReference>
<dbReference type="InterPro" id="IPR000276">
    <property type="entry name" value="GPCR_Rhodpsn"/>
</dbReference>
<dbReference type="InterPro" id="IPR017452">
    <property type="entry name" value="GPCR_Rhodpsn_7TM"/>
</dbReference>
<dbReference type="InterPro" id="IPR001760">
    <property type="entry name" value="Opsin"/>
</dbReference>
<dbReference type="InterPro" id="IPR027430">
    <property type="entry name" value="Retinal_BS"/>
</dbReference>
<dbReference type="PANTHER" id="PTHR24240">
    <property type="entry name" value="OPSIN"/>
    <property type="match status" value="1"/>
</dbReference>
<dbReference type="Pfam" id="PF00001">
    <property type="entry name" value="7tm_1"/>
    <property type="match status" value="1"/>
</dbReference>
<dbReference type="PRINTS" id="PR00237">
    <property type="entry name" value="GPCRRHODOPSN"/>
</dbReference>
<dbReference type="PRINTS" id="PR00238">
    <property type="entry name" value="OPSIN"/>
</dbReference>
<dbReference type="SMART" id="SM01381">
    <property type="entry name" value="7TM_GPCR_Srsx"/>
    <property type="match status" value="1"/>
</dbReference>
<dbReference type="SUPFAM" id="SSF81321">
    <property type="entry name" value="Family A G protein-coupled receptor-like"/>
    <property type="match status" value="1"/>
</dbReference>
<dbReference type="PROSITE" id="PS00237">
    <property type="entry name" value="G_PROTEIN_RECEP_F1_1"/>
    <property type="match status" value="1"/>
</dbReference>
<dbReference type="PROSITE" id="PS50262">
    <property type="entry name" value="G_PROTEIN_RECEP_F1_2"/>
    <property type="match status" value="1"/>
</dbReference>
<dbReference type="PROSITE" id="PS00238">
    <property type="entry name" value="OPSIN"/>
    <property type="match status" value="1"/>
</dbReference>
<organism>
    <name type="scientific">Phodopus sungorus</name>
    <name type="common">Striped hairy-footed hamster</name>
    <name type="synonym">Djungarian hamster</name>
    <dbReference type="NCBI Taxonomy" id="10044"/>
    <lineage>
        <taxon>Eukaryota</taxon>
        <taxon>Metazoa</taxon>
        <taxon>Chordata</taxon>
        <taxon>Craniata</taxon>
        <taxon>Vertebrata</taxon>
        <taxon>Euteleostomi</taxon>
        <taxon>Mammalia</taxon>
        <taxon>Eutheria</taxon>
        <taxon>Euarchontoglires</taxon>
        <taxon>Glires</taxon>
        <taxon>Rodentia</taxon>
        <taxon>Myomorpha</taxon>
        <taxon>Muroidea</taxon>
        <taxon>Cricetidae</taxon>
        <taxon>Cricetinae</taxon>
        <taxon>Phodopus</taxon>
    </lineage>
</organism>
<accession>Q5XXP2</accession>
<evidence type="ECO:0000250" key="1"/>
<evidence type="ECO:0000250" key="2">
    <source>
        <dbReference type="UniProtKB" id="Q9QXZ9"/>
    </source>
</evidence>
<evidence type="ECO:0000255" key="3"/>
<evidence type="ECO:0000255" key="4">
    <source>
        <dbReference type="PROSITE-ProRule" id="PRU00521"/>
    </source>
</evidence>
<evidence type="ECO:0000256" key="5">
    <source>
        <dbReference type="SAM" id="MobiDB-lite"/>
    </source>
</evidence>
<evidence type="ECO:0000269" key="6">
    <source>
    </source>
</evidence>
<evidence type="ECO:0000312" key="7">
    <source>
        <dbReference type="EMBL" id="AAU11506.1"/>
    </source>
</evidence>
<sequence length="469" mass="51202">MDSPPGPTAPPGLTQGPSFMASTTLHSHWNSTQKVSTRAQLLAVSPTASGPEAAAWVPFPTVDVPDHAHYILGTVILLVGLTGMLGNLTVIYTFCRSRSLRTPANMLIINLAVSDFLMSFTQAPVFFASSLYKKWLFGETGCEFYAFCGAVLGITSMITLTAIALDRYLVITRPLATIGMGSKRRTALVLLGIWLYALAWSLPPFFGWSAYVPEGLLTSCSWDYVTFTPQVRAYTMLLFCFVFFLPLLVIIFCYISIFRAIRETGRACEGWSESPQRRRQWHRLQSEWKMAKVALIVILLFVLSWAPYSTVALVAFAGYSHILTPYMSSVPAVIAKASAIHNPIVYAITHPKYRAAIAQHLPCLGVLLGVSSQRNRPSLSYRSTHRSTLSSQSSDLSWISAPKRQESLGSESEVGWTDTEATAVWGAAQPASGQSSCGQNLEDGMVKAPSSPQAKGQLPSLDLGMQDAP</sequence>
<proteinExistence type="evidence at transcript level"/>